<dbReference type="EC" id="7.1.1.-" evidence="1"/>
<dbReference type="EMBL" id="CP000611">
    <property type="protein sequence ID" value="ABQ74964.1"/>
    <property type="molecule type" value="Genomic_DNA"/>
</dbReference>
<dbReference type="RefSeq" id="WP_003416430.1">
    <property type="nucleotide sequence ID" value="NZ_CP016972.1"/>
</dbReference>
<dbReference type="SMR" id="A5U7G4"/>
<dbReference type="GeneID" id="45427135"/>
<dbReference type="KEGG" id="mra:MRA_3181"/>
<dbReference type="eggNOG" id="COG0649">
    <property type="taxonomic scope" value="Bacteria"/>
</dbReference>
<dbReference type="HOGENOM" id="CLU_015134_1_2_11"/>
<dbReference type="Proteomes" id="UP000001988">
    <property type="component" value="Chromosome"/>
</dbReference>
<dbReference type="GO" id="GO:0005886">
    <property type="term" value="C:plasma membrane"/>
    <property type="evidence" value="ECO:0007669"/>
    <property type="project" value="UniProtKB-SubCell"/>
</dbReference>
<dbReference type="GO" id="GO:0051287">
    <property type="term" value="F:NAD binding"/>
    <property type="evidence" value="ECO:0007669"/>
    <property type="project" value="InterPro"/>
</dbReference>
<dbReference type="GO" id="GO:0050136">
    <property type="term" value="F:NADH:ubiquinone reductase (non-electrogenic) activity"/>
    <property type="evidence" value="ECO:0007669"/>
    <property type="project" value="UniProtKB-UniRule"/>
</dbReference>
<dbReference type="GO" id="GO:0048038">
    <property type="term" value="F:quinone binding"/>
    <property type="evidence" value="ECO:0007669"/>
    <property type="project" value="UniProtKB-KW"/>
</dbReference>
<dbReference type="FunFam" id="1.10.645.10:FF:000005">
    <property type="entry name" value="NADH-quinone oxidoreductase subunit D"/>
    <property type="match status" value="1"/>
</dbReference>
<dbReference type="Gene3D" id="1.10.645.10">
    <property type="entry name" value="Cytochrome-c3 Hydrogenase, chain B"/>
    <property type="match status" value="1"/>
</dbReference>
<dbReference type="HAMAP" id="MF_01358">
    <property type="entry name" value="NDH1_NuoD"/>
    <property type="match status" value="1"/>
</dbReference>
<dbReference type="InterPro" id="IPR001135">
    <property type="entry name" value="NADH_Q_OxRdtase_suD"/>
</dbReference>
<dbReference type="InterPro" id="IPR014029">
    <property type="entry name" value="NADH_UbQ_OxRdtase_49kDa_CS"/>
</dbReference>
<dbReference type="InterPro" id="IPR022885">
    <property type="entry name" value="NDH1_su_D/H"/>
</dbReference>
<dbReference type="InterPro" id="IPR029014">
    <property type="entry name" value="NiFe-Hase_large"/>
</dbReference>
<dbReference type="NCBIfam" id="TIGR01962">
    <property type="entry name" value="NuoD"/>
    <property type="match status" value="1"/>
</dbReference>
<dbReference type="NCBIfam" id="NF004739">
    <property type="entry name" value="PRK06075.1"/>
    <property type="match status" value="1"/>
</dbReference>
<dbReference type="PANTHER" id="PTHR11993:SF10">
    <property type="entry name" value="NADH DEHYDROGENASE [UBIQUINONE] IRON-SULFUR PROTEIN 2, MITOCHONDRIAL"/>
    <property type="match status" value="1"/>
</dbReference>
<dbReference type="PANTHER" id="PTHR11993">
    <property type="entry name" value="NADH-UBIQUINONE OXIDOREDUCTASE 49 KDA SUBUNIT"/>
    <property type="match status" value="1"/>
</dbReference>
<dbReference type="Pfam" id="PF00346">
    <property type="entry name" value="Complex1_49kDa"/>
    <property type="match status" value="1"/>
</dbReference>
<dbReference type="SUPFAM" id="SSF56762">
    <property type="entry name" value="HydB/Nqo4-like"/>
    <property type="match status" value="1"/>
</dbReference>
<dbReference type="PROSITE" id="PS00535">
    <property type="entry name" value="COMPLEX1_49K"/>
    <property type="match status" value="1"/>
</dbReference>
<name>NUOD_MYCTA</name>
<accession>A5U7G4</accession>
<organism>
    <name type="scientific">Mycobacterium tuberculosis (strain ATCC 25177 / H37Ra)</name>
    <dbReference type="NCBI Taxonomy" id="419947"/>
    <lineage>
        <taxon>Bacteria</taxon>
        <taxon>Bacillati</taxon>
        <taxon>Actinomycetota</taxon>
        <taxon>Actinomycetes</taxon>
        <taxon>Mycobacteriales</taxon>
        <taxon>Mycobacteriaceae</taxon>
        <taxon>Mycobacterium</taxon>
        <taxon>Mycobacterium tuberculosis complex</taxon>
    </lineage>
</organism>
<protein>
    <recommendedName>
        <fullName evidence="1">NADH-quinone oxidoreductase subunit D</fullName>
        <ecNumber evidence="1">7.1.1.-</ecNumber>
    </recommendedName>
    <alternativeName>
        <fullName evidence="1">NADH dehydrogenase I subunit D</fullName>
    </alternativeName>
    <alternativeName>
        <fullName evidence="1">NDH-1 subunit D</fullName>
    </alternativeName>
</protein>
<keyword id="KW-1003">Cell membrane</keyword>
<keyword id="KW-0472">Membrane</keyword>
<keyword id="KW-0520">NAD</keyword>
<keyword id="KW-0874">Quinone</keyword>
<keyword id="KW-1185">Reference proteome</keyword>
<keyword id="KW-1278">Translocase</keyword>
<keyword id="KW-0813">Transport</keyword>
<comment type="function">
    <text evidence="1">NDH-1 shuttles electrons from NADH, via FMN and iron-sulfur (Fe-S) centers, to quinones in the respiratory chain. The immediate electron acceptor for the enzyme in this species is believed to be a menaquinone. Couples the redox reaction to proton translocation (for every two electrons transferred, four hydrogen ions are translocated across the cytoplasmic membrane), and thus conserves the redox energy in a proton gradient.</text>
</comment>
<comment type="catalytic activity">
    <reaction evidence="1">
        <text>a quinone + NADH + 5 H(+)(in) = a quinol + NAD(+) + 4 H(+)(out)</text>
        <dbReference type="Rhea" id="RHEA:57888"/>
        <dbReference type="ChEBI" id="CHEBI:15378"/>
        <dbReference type="ChEBI" id="CHEBI:24646"/>
        <dbReference type="ChEBI" id="CHEBI:57540"/>
        <dbReference type="ChEBI" id="CHEBI:57945"/>
        <dbReference type="ChEBI" id="CHEBI:132124"/>
    </reaction>
</comment>
<comment type="subunit">
    <text evidence="1">NDH-1 is composed of 14 different subunits. Subunits NuoB, C, D, E, F, and G constitute the peripheral sector of the complex.</text>
</comment>
<comment type="subcellular location">
    <subcellularLocation>
        <location evidence="1">Cell membrane</location>
        <topology evidence="1">Peripheral membrane protein</topology>
        <orientation evidence="1">Cytoplasmic side</orientation>
    </subcellularLocation>
</comment>
<comment type="similarity">
    <text evidence="1">Belongs to the complex I 49 kDa subunit family.</text>
</comment>
<proteinExistence type="inferred from homology"/>
<evidence type="ECO:0000255" key="1">
    <source>
        <dbReference type="HAMAP-Rule" id="MF_01358"/>
    </source>
</evidence>
<gene>
    <name evidence="1" type="primary">nuoD</name>
    <name type="ordered locus">MRA_3181</name>
</gene>
<sequence length="440" mass="48164">MTAIADSAGGAGETVLVAGGQDWQQVVDAARSADPGERIVVNMGPQHPSTHGVLRLILEIEGETVVEARCGIGYLHTGIEKNLEYRYWTQGVTFVTRMDYLSPFFNETAYCLGVEKLLGITDEIPERVNVIRVLMMELNRISSHLVALATGGMELGAMTPMFVGFRAREIVLTLFEKITGLRMNSAYIRPGGVAQDLPPNAATEIAEALKQLRQPLREMGELLNENAIWKARTQGVGYLDLTGCMALGITGPILRSTGLPHDLRKSEPYCGYQHYEFDVITDDSCDAYGRYMIRVKEMWESMKIVEQCLDKLRPGPTMISDRKLAWPADLQVGPDGLGNSPKHIAKIMGSSMEALIHHFKLVTEGIRVPAGQVYVAVESPRGELGVHMVSDGGTRPYRVHYRDPSFTNLQSVAAMCEGGMVADLIAAVASIDPVMGGVDR</sequence>
<reference key="1">
    <citation type="journal article" date="2008" name="PLoS ONE">
        <title>Genetic basis of virulence attenuation revealed by comparative genomic analysis of Mycobacterium tuberculosis strain H37Ra versus H37Rv.</title>
        <authorList>
            <person name="Zheng H."/>
            <person name="Lu L."/>
            <person name="Wang B."/>
            <person name="Pu S."/>
            <person name="Zhang X."/>
            <person name="Zhu G."/>
            <person name="Shi W."/>
            <person name="Zhang L."/>
            <person name="Wang H."/>
            <person name="Wang S."/>
            <person name="Zhao G."/>
            <person name="Zhang Y."/>
        </authorList>
    </citation>
    <scope>NUCLEOTIDE SEQUENCE [LARGE SCALE GENOMIC DNA]</scope>
    <source>
        <strain>ATCC 25177 / H37Ra</strain>
    </source>
</reference>
<feature type="chain" id="PRO_0000357862" description="NADH-quinone oxidoreductase subunit D">
    <location>
        <begin position="1"/>
        <end position="440"/>
    </location>
</feature>